<name>RL15_PSEPF</name>
<protein>
    <recommendedName>
        <fullName evidence="1">Large ribosomal subunit protein uL15</fullName>
    </recommendedName>
    <alternativeName>
        <fullName evidence="3">50S ribosomal protein L15</fullName>
    </alternativeName>
</protein>
<sequence>MKLNDLSPAPGSRREKHRPGRGIGSGLGKTGGRGHKGQTSRSGGTIAPGFEGGQQPLHRRLPKFGFVSLKAMDRAEVRLSELAKVEGDIVTVQSLKDANVINVNVQRVKIMLSGEVARAVTIGKGIGATKGARAAIEAAGGKFEE</sequence>
<keyword id="KW-0687">Ribonucleoprotein</keyword>
<keyword id="KW-0689">Ribosomal protein</keyword>
<keyword id="KW-0694">RNA-binding</keyword>
<keyword id="KW-0699">rRNA-binding</keyword>
<proteinExistence type="inferred from homology"/>
<feature type="chain" id="PRO_0000251543" description="Large ribosomal subunit protein uL15">
    <location>
        <begin position="1"/>
        <end position="145"/>
    </location>
</feature>
<feature type="region of interest" description="Disordered" evidence="2">
    <location>
        <begin position="1"/>
        <end position="57"/>
    </location>
</feature>
<feature type="compositionally biased region" description="Gly residues" evidence="2">
    <location>
        <begin position="21"/>
        <end position="31"/>
    </location>
</feature>
<evidence type="ECO:0000255" key="1">
    <source>
        <dbReference type="HAMAP-Rule" id="MF_01341"/>
    </source>
</evidence>
<evidence type="ECO:0000256" key="2">
    <source>
        <dbReference type="SAM" id="MobiDB-lite"/>
    </source>
</evidence>
<evidence type="ECO:0000305" key="3"/>
<dbReference type="EMBL" id="CP000094">
    <property type="protein sequence ID" value="ABA76797.1"/>
    <property type="molecule type" value="Genomic_DNA"/>
</dbReference>
<dbReference type="RefSeq" id="WP_011336169.1">
    <property type="nucleotide sequence ID" value="NC_007492.2"/>
</dbReference>
<dbReference type="SMR" id="Q3K607"/>
<dbReference type="GeneID" id="75524119"/>
<dbReference type="KEGG" id="pfo:Pfl01_5060"/>
<dbReference type="eggNOG" id="COG0200">
    <property type="taxonomic scope" value="Bacteria"/>
</dbReference>
<dbReference type="HOGENOM" id="CLU_055188_4_2_6"/>
<dbReference type="Proteomes" id="UP000002704">
    <property type="component" value="Chromosome"/>
</dbReference>
<dbReference type="GO" id="GO:0022625">
    <property type="term" value="C:cytosolic large ribosomal subunit"/>
    <property type="evidence" value="ECO:0007669"/>
    <property type="project" value="TreeGrafter"/>
</dbReference>
<dbReference type="GO" id="GO:0019843">
    <property type="term" value="F:rRNA binding"/>
    <property type="evidence" value="ECO:0007669"/>
    <property type="project" value="UniProtKB-UniRule"/>
</dbReference>
<dbReference type="GO" id="GO:0003735">
    <property type="term" value="F:structural constituent of ribosome"/>
    <property type="evidence" value="ECO:0007669"/>
    <property type="project" value="InterPro"/>
</dbReference>
<dbReference type="GO" id="GO:0006412">
    <property type="term" value="P:translation"/>
    <property type="evidence" value="ECO:0007669"/>
    <property type="project" value="UniProtKB-UniRule"/>
</dbReference>
<dbReference type="Gene3D" id="3.100.10.10">
    <property type="match status" value="1"/>
</dbReference>
<dbReference type="HAMAP" id="MF_01341">
    <property type="entry name" value="Ribosomal_uL15"/>
    <property type="match status" value="1"/>
</dbReference>
<dbReference type="InterPro" id="IPR030878">
    <property type="entry name" value="Ribosomal_uL15"/>
</dbReference>
<dbReference type="InterPro" id="IPR021131">
    <property type="entry name" value="Ribosomal_uL15/eL18"/>
</dbReference>
<dbReference type="InterPro" id="IPR036227">
    <property type="entry name" value="Ribosomal_uL15/eL18_sf"/>
</dbReference>
<dbReference type="InterPro" id="IPR005749">
    <property type="entry name" value="Ribosomal_uL15_bac-type"/>
</dbReference>
<dbReference type="NCBIfam" id="TIGR01071">
    <property type="entry name" value="rplO_bact"/>
    <property type="match status" value="1"/>
</dbReference>
<dbReference type="PANTHER" id="PTHR12934">
    <property type="entry name" value="50S RIBOSOMAL PROTEIN L15"/>
    <property type="match status" value="1"/>
</dbReference>
<dbReference type="PANTHER" id="PTHR12934:SF11">
    <property type="entry name" value="LARGE RIBOSOMAL SUBUNIT PROTEIN UL15M"/>
    <property type="match status" value="1"/>
</dbReference>
<dbReference type="Pfam" id="PF00828">
    <property type="entry name" value="Ribosomal_L27A"/>
    <property type="match status" value="1"/>
</dbReference>
<dbReference type="SUPFAM" id="SSF52080">
    <property type="entry name" value="Ribosomal proteins L15p and L18e"/>
    <property type="match status" value="1"/>
</dbReference>
<gene>
    <name evidence="1" type="primary">rplO</name>
    <name type="ordered locus">Pfl01_5060</name>
</gene>
<reference key="1">
    <citation type="journal article" date="2009" name="Genome Biol.">
        <title>Genomic and genetic analyses of diversity and plant interactions of Pseudomonas fluorescens.</title>
        <authorList>
            <person name="Silby M.W."/>
            <person name="Cerdeno-Tarraga A.M."/>
            <person name="Vernikos G.S."/>
            <person name="Giddens S.R."/>
            <person name="Jackson R.W."/>
            <person name="Preston G.M."/>
            <person name="Zhang X.-X."/>
            <person name="Moon C.D."/>
            <person name="Gehrig S.M."/>
            <person name="Godfrey S.A.C."/>
            <person name="Knight C.G."/>
            <person name="Malone J.G."/>
            <person name="Robinson Z."/>
            <person name="Spiers A.J."/>
            <person name="Harris S."/>
            <person name="Challis G.L."/>
            <person name="Yaxley A.M."/>
            <person name="Harris D."/>
            <person name="Seeger K."/>
            <person name="Murphy L."/>
            <person name="Rutter S."/>
            <person name="Squares R."/>
            <person name="Quail M.A."/>
            <person name="Saunders E."/>
            <person name="Mavromatis K."/>
            <person name="Brettin T.S."/>
            <person name="Bentley S.D."/>
            <person name="Hothersall J."/>
            <person name="Stephens E."/>
            <person name="Thomas C.M."/>
            <person name="Parkhill J."/>
            <person name="Levy S.B."/>
            <person name="Rainey P.B."/>
            <person name="Thomson N.R."/>
        </authorList>
    </citation>
    <scope>NUCLEOTIDE SEQUENCE [LARGE SCALE GENOMIC DNA]</scope>
    <source>
        <strain>Pf0-1</strain>
    </source>
</reference>
<comment type="function">
    <text evidence="1">Binds to the 23S rRNA.</text>
</comment>
<comment type="subunit">
    <text evidence="1">Part of the 50S ribosomal subunit.</text>
</comment>
<comment type="similarity">
    <text evidence="1">Belongs to the universal ribosomal protein uL15 family.</text>
</comment>
<accession>Q3K607</accession>
<organism>
    <name type="scientific">Pseudomonas fluorescens (strain Pf0-1)</name>
    <dbReference type="NCBI Taxonomy" id="205922"/>
    <lineage>
        <taxon>Bacteria</taxon>
        <taxon>Pseudomonadati</taxon>
        <taxon>Pseudomonadota</taxon>
        <taxon>Gammaproteobacteria</taxon>
        <taxon>Pseudomonadales</taxon>
        <taxon>Pseudomonadaceae</taxon>
        <taxon>Pseudomonas</taxon>
    </lineage>
</organism>